<accession>B2JJR9</accession>
<sequence>MQTVLFALLRFYKIAVSPMLGNRCRFYPSCSDYAREAIQYHGAARGTYLAARRLCRCHPFSAGGIDLVPPPTPKKR</sequence>
<feature type="chain" id="PRO_1000122623" description="Putative membrane protein insertion efficiency factor">
    <location>
        <begin position="1"/>
        <end position="76"/>
    </location>
</feature>
<protein>
    <recommendedName>
        <fullName evidence="1">Putative membrane protein insertion efficiency factor</fullName>
    </recommendedName>
</protein>
<evidence type="ECO:0000255" key="1">
    <source>
        <dbReference type="HAMAP-Rule" id="MF_00386"/>
    </source>
</evidence>
<organism>
    <name type="scientific">Paraburkholderia phymatum (strain DSM 17167 / CIP 108236 / LMG 21445 / STM815)</name>
    <name type="common">Burkholderia phymatum</name>
    <dbReference type="NCBI Taxonomy" id="391038"/>
    <lineage>
        <taxon>Bacteria</taxon>
        <taxon>Pseudomonadati</taxon>
        <taxon>Pseudomonadota</taxon>
        <taxon>Betaproteobacteria</taxon>
        <taxon>Burkholderiales</taxon>
        <taxon>Burkholderiaceae</taxon>
        <taxon>Paraburkholderia</taxon>
    </lineage>
</organism>
<keyword id="KW-0997">Cell inner membrane</keyword>
<keyword id="KW-1003">Cell membrane</keyword>
<keyword id="KW-0472">Membrane</keyword>
<keyword id="KW-1185">Reference proteome</keyword>
<reference key="1">
    <citation type="journal article" date="2014" name="Stand. Genomic Sci.">
        <title>Complete genome sequence of Burkholderia phymatum STM815(T), a broad host range and efficient nitrogen-fixing symbiont of Mimosa species.</title>
        <authorList>
            <person name="Moulin L."/>
            <person name="Klonowska A."/>
            <person name="Caroline B."/>
            <person name="Booth K."/>
            <person name="Vriezen J.A."/>
            <person name="Melkonian R."/>
            <person name="James E.K."/>
            <person name="Young J.P."/>
            <person name="Bena G."/>
            <person name="Hauser L."/>
            <person name="Land M."/>
            <person name="Kyrpides N."/>
            <person name="Bruce D."/>
            <person name="Chain P."/>
            <person name="Copeland A."/>
            <person name="Pitluck S."/>
            <person name="Woyke T."/>
            <person name="Lizotte-Waniewski M."/>
            <person name="Bristow J."/>
            <person name="Riley M."/>
        </authorList>
    </citation>
    <scope>NUCLEOTIDE SEQUENCE [LARGE SCALE GENOMIC DNA]</scope>
    <source>
        <strain>DSM 17167 / CIP 108236 / LMG 21445 / STM815</strain>
    </source>
</reference>
<gene>
    <name type="ordered locus">Bphy_3099</name>
</gene>
<name>YIDD_PARP8</name>
<proteinExistence type="inferred from homology"/>
<comment type="function">
    <text evidence="1">Could be involved in insertion of integral membrane proteins into the membrane.</text>
</comment>
<comment type="subcellular location">
    <subcellularLocation>
        <location evidence="1">Cell inner membrane</location>
        <topology evidence="1">Peripheral membrane protein</topology>
        <orientation evidence="1">Cytoplasmic side</orientation>
    </subcellularLocation>
</comment>
<comment type="similarity">
    <text evidence="1">Belongs to the UPF0161 family.</text>
</comment>
<dbReference type="EMBL" id="CP001043">
    <property type="protein sequence ID" value="ACC72267.1"/>
    <property type="molecule type" value="Genomic_DNA"/>
</dbReference>
<dbReference type="STRING" id="391038.Bphy_3099"/>
<dbReference type="KEGG" id="bph:Bphy_3099"/>
<dbReference type="eggNOG" id="COG0759">
    <property type="taxonomic scope" value="Bacteria"/>
</dbReference>
<dbReference type="HOGENOM" id="CLU_144811_5_2_4"/>
<dbReference type="OrthoDB" id="9801753at2"/>
<dbReference type="Proteomes" id="UP000001192">
    <property type="component" value="Chromosome 1"/>
</dbReference>
<dbReference type="GO" id="GO:0005886">
    <property type="term" value="C:plasma membrane"/>
    <property type="evidence" value="ECO:0007669"/>
    <property type="project" value="UniProtKB-SubCell"/>
</dbReference>
<dbReference type="HAMAP" id="MF_00386">
    <property type="entry name" value="UPF0161_YidD"/>
    <property type="match status" value="1"/>
</dbReference>
<dbReference type="InterPro" id="IPR002696">
    <property type="entry name" value="Membr_insert_effic_factor_YidD"/>
</dbReference>
<dbReference type="NCBIfam" id="TIGR00278">
    <property type="entry name" value="membrane protein insertion efficiency factor YidD"/>
    <property type="match status" value="1"/>
</dbReference>
<dbReference type="PANTHER" id="PTHR33383">
    <property type="entry name" value="MEMBRANE PROTEIN INSERTION EFFICIENCY FACTOR-RELATED"/>
    <property type="match status" value="1"/>
</dbReference>
<dbReference type="PANTHER" id="PTHR33383:SF1">
    <property type="entry name" value="MEMBRANE PROTEIN INSERTION EFFICIENCY FACTOR-RELATED"/>
    <property type="match status" value="1"/>
</dbReference>
<dbReference type="Pfam" id="PF01809">
    <property type="entry name" value="YidD"/>
    <property type="match status" value="1"/>
</dbReference>
<dbReference type="SMART" id="SM01234">
    <property type="entry name" value="Haemolytic"/>
    <property type="match status" value="1"/>
</dbReference>